<sequence length="487" mass="53055">MTVQTAQIVKNYIGGEWVESISTKMEAVYNPATGEVIAQVPLSTKVDVEQAVLAANEAFKSWSKTAVPKRARILFKYQQLLVDNWEDLAKLITIENGKSYNEAYGEVLRGIECVEFAAGAPTLMMGKQLPDIATGIESGMYRYPIGVIGGITPFNFPMMVPCWMFPLAIACGNTFVLKPSERTPLLAAKLVELAEEAGLPKGVLNIVNGAHDVVNGLLEHKLVKAISFVGSQPVAEYVYKKGTENLKRVQALAGAKNHSIVLSDANLELATKQIISAAFGSAGERCMAASVVTVQEEIADQLVGRLVEEANKIVIGNGLDEDVFLGPVIRDNHKERTIGYIDSGVEQGATLVRDGREDTAVKGAGYFVGPTIFDHVTQEMKIWQDEIFAPVLSIVRVKSLDEAIEIANESRFANGACIYTDSGASVRQFRETIESGMLGVNVGVPAPMAFFPFSGWKDSFYGDLHANGTDGVEFYTRKKMLTSRWEK</sequence>
<reference key="1">
    <citation type="journal article" date="2006" name="J. Bacteriol.">
        <title>Pathogenomic sequence analysis of Bacillus cereus and Bacillus thuringiensis isolates closely related to Bacillus anthracis.</title>
        <authorList>
            <person name="Han C.S."/>
            <person name="Xie G."/>
            <person name="Challacombe J.F."/>
            <person name="Altherr M.R."/>
            <person name="Bhotika S.S."/>
            <person name="Bruce D."/>
            <person name="Campbell C.S."/>
            <person name="Campbell M.L."/>
            <person name="Chen J."/>
            <person name="Chertkov O."/>
            <person name="Cleland C."/>
            <person name="Dimitrijevic M."/>
            <person name="Doggett N.A."/>
            <person name="Fawcett J.J."/>
            <person name="Glavina T."/>
            <person name="Goodwin L.A."/>
            <person name="Hill K.K."/>
            <person name="Hitchcock P."/>
            <person name="Jackson P.J."/>
            <person name="Keim P."/>
            <person name="Kewalramani A.R."/>
            <person name="Longmire J."/>
            <person name="Lucas S."/>
            <person name="Malfatti S."/>
            <person name="McMurry K."/>
            <person name="Meincke L.J."/>
            <person name="Misra M."/>
            <person name="Moseman B.L."/>
            <person name="Mundt M."/>
            <person name="Munk A.C."/>
            <person name="Okinaka R.T."/>
            <person name="Parson-Quintana B."/>
            <person name="Reilly L.P."/>
            <person name="Richardson P."/>
            <person name="Robinson D.L."/>
            <person name="Rubin E."/>
            <person name="Saunders E."/>
            <person name="Tapia R."/>
            <person name="Tesmer J.G."/>
            <person name="Thayer N."/>
            <person name="Thompson L.S."/>
            <person name="Tice H."/>
            <person name="Ticknor L.O."/>
            <person name="Wills P.L."/>
            <person name="Brettin T.S."/>
            <person name="Gilna P."/>
        </authorList>
    </citation>
    <scope>NUCLEOTIDE SEQUENCE [LARGE SCALE GENOMIC DNA]</scope>
    <source>
        <strain>ZK / E33L</strain>
    </source>
</reference>
<gene>
    <name evidence="1" type="primary">iolA3</name>
    <name type="ordered locus">pE33L466_0301</name>
</gene>
<protein>
    <recommendedName>
        <fullName evidence="1">Malonate-semialdehyde dehydrogenase 3</fullName>
        <shortName evidence="1">MSA dehydrogenase 3</shortName>
        <ecNumber evidence="1">1.2.1.27</ecNumber>
    </recommendedName>
    <alternativeName>
        <fullName evidence="1">Methylmalonate-semialdehyde dehydrogenase 3</fullName>
        <shortName evidence="1">MMSA dehydrogenase 3</shortName>
        <shortName evidence="1">MSDH 3</shortName>
    </alternativeName>
</protein>
<proteinExistence type="inferred from homology"/>
<keyword id="KW-0520">NAD</keyword>
<keyword id="KW-0560">Oxidoreductase</keyword>
<keyword id="KW-0614">Plasmid</keyword>
<name>IOLA3_BACCZ</name>
<feature type="chain" id="PRO_0000352324" description="Malonate-semialdehyde dehydrogenase 3">
    <location>
        <begin position="1"/>
        <end position="487"/>
    </location>
</feature>
<feature type="active site" description="Nucleophile" evidence="1">
    <location>
        <position position="286"/>
    </location>
</feature>
<feature type="binding site" evidence="1">
    <location>
        <position position="154"/>
    </location>
    <ligand>
        <name>NAD(+)</name>
        <dbReference type="ChEBI" id="CHEBI:57540"/>
    </ligand>
</feature>
<feature type="binding site" evidence="1">
    <location>
        <position position="178"/>
    </location>
    <ligand>
        <name>NAD(+)</name>
        <dbReference type="ChEBI" id="CHEBI:57540"/>
    </ligand>
</feature>
<feature type="binding site" evidence="1">
    <location>
        <position position="181"/>
    </location>
    <ligand>
        <name>NAD(+)</name>
        <dbReference type="ChEBI" id="CHEBI:57540"/>
    </ligand>
</feature>
<feature type="binding site" evidence="1">
    <location>
        <position position="182"/>
    </location>
    <ligand>
        <name>NAD(+)</name>
        <dbReference type="ChEBI" id="CHEBI:57540"/>
    </ligand>
</feature>
<feature type="binding site" evidence="1">
    <location>
        <position position="231"/>
    </location>
    <ligand>
        <name>NAD(+)</name>
        <dbReference type="ChEBI" id="CHEBI:57540"/>
    </ligand>
</feature>
<feature type="binding site" evidence="1">
    <location>
        <position position="386"/>
    </location>
    <ligand>
        <name>NAD(+)</name>
        <dbReference type="ChEBI" id="CHEBI:57540"/>
    </ligand>
</feature>
<accession>Q4V1F6</accession>
<dbReference type="EC" id="1.2.1.27" evidence="1"/>
<dbReference type="EMBL" id="CP000040">
    <property type="protein sequence ID" value="AAY60451.1"/>
    <property type="molecule type" value="Genomic_DNA"/>
</dbReference>
<dbReference type="RefSeq" id="WP_000218121.1">
    <property type="nucleotide sequence ID" value="NC_007103.1"/>
</dbReference>
<dbReference type="SMR" id="Q4V1F6"/>
<dbReference type="KEGG" id="bcz:pE33L466_0301"/>
<dbReference type="PATRIC" id="fig|288681.22.peg.5505"/>
<dbReference type="UniPathway" id="UPA00076">
    <property type="reaction ID" value="UER00148"/>
</dbReference>
<dbReference type="Proteomes" id="UP000002612">
    <property type="component" value="Plasmid pE33L466"/>
</dbReference>
<dbReference type="GO" id="GO:0018478">
    <property type="term" value="F:malonate-semialdehyde dehydrogenase (acetylating) activity"/>
    <property type="evidence" value="ECO:0007669"/>
    <property type="project" value="UniProtKB-UniRule"/>
</dbReference>
<dbReference type="GO" id="GO:0004491">
    <property type="term" value="F:methylmalonate-semialdehyde dehydrogenase (acylating, NAD) activity"/>
    <property type="evidence" value="ECO:0007669"/>
    <property type="project" value="UniProtKB-UniRule"/>
</dbReference>
<dbReference type="GO" id="GO:0019310">
    <property type="term" value="P:inositol catabolic process"/>
    <property type="evidence" value="ECO:0007669"/>
    <property type="project" value="UniProtKB-UniRule"/>
</dbReference>
<dbReference type="GO" id="GO:0006210">
    <property type="term" value="P:thymine catabolic process"/>
    <property type="evidence" value="ECO:0007669"/>
    <property type="project" value="TreeGrafter"/>
</dbReference>
<dbReference type="GO" id="GO:0006574">
    <property type="term" value="P:valine catabolic process"/>
    <property type="evidence" value="ECO:0007669"/>
    <property type="project" value="TreeGrafter"/>
</dbReference>
<dbReference type="CDD" id="cd07085">
    <property type="entry name" value="ALDH_F6_MMSDH"/>
    <property type="match status" value="1"/>
</dbReference>
<dbReference type="FunFam" id="3.40.309.10:FF:000002">
    <property type="entry name" value="Methylmalonate-semialdehyde dehydrogenase (Acylating)"/>
    <property type="match status" value="1"/>
</dbReference>
<dbReference type="FunFam" id="3.40.605.10:FF:000003">
    <property type="entry name" value="Methylmalonate-semialdehyde dehydrogenase [acylating]"/>
    <property type="match status" value="1"/>
</dbReference>
<dbReference type="Gene3D" id="3.40.605.10">
    <property type="entry name" value="Aldehyde Dehydrogenase, Chain A, domain 1"/>
    <property type="match status" value="1"/>
</dbReference>
<dbReference type="Gene3D" id="3.40.309.10">
    <property type="entry name" value="Aldehyde Dehydrogenase, Chain A, domain 2"/>
    <property type="match status" value="1"/>
</dbReference>
<dbReference type="HAMAP" id="MF_01670">
    <property type="entry name" value="IolA"/>
    <property type="match status" value="1"/>
</dbReference>
<dbReference type="InterPro" id="IPR016161">
    <property type="entry name" value="Ald_DH/histidinol_DH"/>
</dbReference>
<dbReference type="InterPro" id="IPR016163">
    <property type="entry name" value="Ald_DH_C"/>
</dbReference>
<dbReference type="InterPro" id="IPR016160">
    <property type="entry name" value="Ald_DH_CS_CYS"/>
</dbReference>
<dbReference type="InterPro" id="IPR016162">
    <property type="entry name" value="Ald_DH_N"/>
</dbReference>
<dbReference type="InterPro" id="IPR015590">
    <property type="entry name" value="Aldehyde_DH_dom"/>
</dbReference>
<dbReference type="InterPro" id="IPR010061">
    <property type="entry name" value="MeMal-semiAld_DH"/>
</dbReference>
<dbReference type="InterPro" id="IPR023510">
    <property type="entry name" value="MSDH_GmP_bac"/>
</dbReference>
<dbReference type="NCBIfam" id="TIGR01722">
    <property type="entry name" value="MMSDH"/>
    <property type="match status" value="1"/>
</dbReference>
<dbReference type="PANTHER" id="PTHR43866">
    <property type="entry name" value="MALONATE-SEMIALDEHYDE DEHYDROGENASE"/>
    <property type="match status" value="1"/>
</dbReference>
<dbReference type="PANTHER" id="PTHR43866:SF4">
    <property type="entry name" value="MALONATE-SEMIALDEHYDE DEHYDROGENASE"/>
    <property type="match status" value="1"/>
</dbReference>
<dbReference type="Pfam" id="PF00171">
    <property type="entry name" value="Aldedh"/>
    <property type="match status" value="1"/>
</dbReference>
<dbReference type="SUPFAM" id="SSF53720">
    <property type="entry name" value="ALDH-like"/>
    <property type="match status" value="1"/>
</dbReference>
<dbReference type="PROSITE" id="PS00070">
    <property type="entry name" value="ALDEHYDE_DEHYDR_CYS"/>
    <property type="match status" value="1"/>
</dbReference>
<comment type="function">
    <text evidence="1">Catalyzes the oxidation of malonate semialdehyde (MSA) and methylmalonate semialdehyde (MMSA) into acetyl-CoA and propanoyl-CoA, respectively. Is involved in a myo-inositol catabolic pathway. Bicarbonate, and not CO2, is the end-product of the enzymatic reaction.</text>
</comment>
<comment type="catalytic activity">
    <reaction evidence="1">
        <text>3-oxopropanoate + NAD(+) + CoA + H2O = hydrogencarbonate + acetyl-CoA + NADH + H(+)</text>
        <dbReference type="Rhea" id="RHEA:76615"/>
        <dbReference type="ChEBI" id="CHEBI:15377"/>
        <dbReference type="ChEBI" id="CHEBI:15378"/>
        <dbReference type="ChEBI" id="CHEBI:17544"/>
        <dbReference type="ChEBI" id="CHEBI:33190"/>
        <dbReference type="ChEBI" id="CHEBI:57287"/>
        <dbReference type="ChEBI" id="CHEBI:57288"/>
        <dbReference type="ChEBI" id="CHEBI:57540"/>
        <dbReference type="ChEBI" id="CHEBI:57945"/>
        <dbReference type="EC" id="1.2.1.27"/>
    </reaction>
    <physiologicalReaction direction="left-to-right" evidence="1">
        <dbReference type="Rhea" id="RHEA:76616"/>
    </physiologicalReaction>
</comment>
<comment type="catalytic activity">
    <reaction evidence="1">
        <text>2-methyl-3-oxopropanoate + NAD(+) + CoA + H2O = propanoyl-CoA + hydrogencarbonate + NADH + H(+)</text>
        <dbReference type="Rhea" id="RHEA:20804"/>
        <dbReference type="ChEBI" id="CHEBI:15377"/>
        <dbReference type="ChEBI" id="CHEBI:15378"/>
        <dbReference type="ChEBI" id="CHEBI:17544"/>
        <dbReference type="ChEBI" id="CHEBI:57287"/>
        <dbReference type="ChEBI" id="CHEBI:57392"/>
        <dbReference type="ChEBI" id="CHEBI:57540"/>
        <dbReference type="ChEBI" id="CHEBI:57700"/>
        <dbReference type="ChEBI" id="CHEBI:57945"/>
        <dbReference type="EC" id="1.2.1.27"/>
    </reaction>
    <physiologicalReaction direction="left-to-right" evidence="1">
        <dbReference type="Rhea" id="RHEA:20805"/>
    </physiologicalReaction>
</comment>
<comment type="pathway">
    <text evidence="1">Polyol metabolism; myo-inositol degradation into acetyl-CoA; acetyl-CoA from myo-inositol: step 7/7.</text>
</comment>
<comment type="subunit">
    <text evidence="1">Homotetramer.</text>
</comment>
<comment type="similarity">
    <text evidence="1">Belongs to the aldehyde dehydrogenase family. IolA subfamily.</text>
</comment>
<evidence type="ECO:0000255" key="1">
    <source>
        <dbReference type="HAMAP-Rule" id="MF_01670"/>
    </source>
</evidence>
<organism>
    <name type="scientific">Bacillus cereus (strain ZK / E33L)</name>
    <dbReference type="NCBI Taxonomy" id="288681"/>
    <lineage>
        <taxon>Bacteria</taxon>
        <taxon>Bacillati</taxon>
        <taxon>Bacillota</taxon>
        <taxon>Bacilli</taxon>
        <taxon>Bacillales</taxon>
        <taxon>Bacillaceae</taxon>
        <taxon>Bacillus</taxon>
        <taxon>Bacillus cereus group</taxon>
    </lineage>
</organism>
<geneLocation type="plasmid">
    <name>pE33L466</name>
</geneLocation>